<organism>
    <name type="scientific">Escherichia coli (strain K12)</name>
    <dbReference type="NCBI Taxonomy" id="83333"/>
    <lineage>
        <taxon>Bacteria</taxon>
        <taxon>Pseudomonadati</taxon>
        <taxon>Pseudomonadota</taxon>
        <taxon>Gammaproteobacteria</taxon>
        <taxon>Enterobacterales</taxon>
        <taxon>Enterobacteriaceae</taxon>
        <taxon>Escherichia</taxon>
    </lineage>
</organism>
<feature type="chain" id="PRO_0000209148" description="Kdo(2)-lipid A phosphoethanolamine 7''-transferase">
    <location>
        <begin position="1"/>
        <end position="563"/>
    </location>
</feature>
<feature type="topological domain" description="Cytoplasmic" evidence="1">
    <location>
        <begin position="1"/>
        <end position="9"/>
    </location>
</feature>
<feature type="transmembrane region" description="Helical" evidence="1">
    <location>
        <begin position="10"/>
        <end position="30"/>
    </location>
</feature>
<feature type="topological domain" description="Periplasmic" evidence="1">
    <location>
        <begin position="31"/>
        <end position="48"/>
    </location>
</feature>
<feature type="transmembrane region" description="Helical" evidence="1">
    <location>
        <begin position="49"/>
        <end position="69"/>
    </location>
</feature>
<feature type="topological domain" description="Cytoplasmic" evidence="1">
    <location>
        <begin position="70"/>
        <end position="79"/>
    </location>
</feature>
<feature type="transmembrane region" description="Helical" evidence="1">
    <location>
        <begin position="80"/>
        <end position="100"/>
    </location>
</feature>
<feature type="topological domain" description="Periplasmic" evidence="1">
    <location>
        <begin position="101"/>
        <end position="117"/>
    </location>
</feature>
<feature type="transmembrane region" description="Helical" evidence="1">
    <location>
        <begin position="118"/>
        <end position="138"/>
    </location>
</feature>
<feature type="topological domain" description="Cytoplasmic" evidence="1">
    <location>
        <begin position="139"/>
        <end position="159"/>
    </location>
</feature>
<feature type="transmembrane region" description="Helical" evidence="1">
    <location>
        <begin position="160"/>
        <end position="180"/>
    </location>
</feature>
<feature type="topological domain" description="Periplasmic" evidence="1">
    <location>
        <begin position="181"/>
        <end position="563"/>
    </location>
</feature>
<sequence>MRYIKSITQQKLSFLLAIYIGLFMNGAVFYRRFGSYAHDFTVWKGISAVVELAATVLVTFFLLRLLSLFGRRSWRILASLVVLFSAGASYYMTFLNVVIGYGIIASVMTTDIDLSKEVVGLNFILWLIAVSALPLILIWNNRCRYTLLRQLRTPGQRIRSLAVVVLAGIMVWAPIRLLDIQQKKVERATGVDLPSYGGVVANSYLPSNWLSALGLYAWARVDESSDNNSLLNPAKKFTYQAPQNVDDTYVVFIIGETTRWDHMGIFGYERNTTPKLAQEKNLAAFRGYSCDTATKLSLRCMFVRQGGAEDNPQRTLKEQNIFAVLKQLGFSSDLYAMQSEMWFYSNTMADNIAYREQIGAEPRNRGKPVDDMLLVDEMQQSLGRNPDGKHLIILHTKGSHFNYTQRYPRSFAQWKPECIGVDSGCTKAQMINSYDNSVTYVDHFISSVIDQVRDKKAIVFYAADHGESINEREHLHGTPRELAPPEQFRVPMMVWMSDKYLENPANAQAFAQLKKEADMKVPRRHVELYDTIMGCLGYTSPDGGINENNNWCHIPQAKEAAAN</sequence>
<proteinExistence type="evidence at protein level"/>
<keyword id="KW-0997">Cell inner membrane</keyword>
<keyword id="KW-1003">Cell membrane</keyword>
<keyword id="KW-0903">Direct protein sequencing</keyword>
<keyword id="KW-0441">Lipid A biosynthesis</keyword>
<keyword id="KW-0444">Lipid biosynthesis</keyword>
<keyword id="KW-0443">Lipid metabolism</keyword>
<keyword id="KW-0448">Lipopolysaccharide biosynthesis</keyword>
<keyword id="KW-0472">Membrane</keyword>
<keyword id="KW-1185">Reference proteome</keyword>
<keyword id="KW-0808">Transferase</keyword>
<keyword id="KW-0812">Transmembrane</keyword>
<keyword id="KW-1133">Transmembrane helix</keyword>
<reference key="1">
    <citation type="journal article" date="1994" name="Nucleic Acids Res.">
        <title>Analysis of the Escherichia coli genome. V. DNA sequence of the region from 76.0 to 81.5 minutes.</title>
        <authorList>
            <person name="Sofia H.J."/>
            <person name="Burland V."/>
            <person name="Daniels D.L."/>
            <person name="Plunkett G. III"/>
            <person name="Blattner F.R."/>
        </authorList>
    </citation>
    <scope>NUCLEOTIDE SEQUENCE [LARGE SCALE GENOMIC DNA]</scope>
    <source>
        <strain>K12 / MG1655 / ATCC 47076</strain>
    </source>
</reference>
<reference key="2">
    <citation type="journal article" date="1997" name="Science">
        <title>The complete genome sequence of Escherichia coli K-12.</title>
        <authorList>
            <person name="Blattner F.R."/>
            <person name="Plunkett G. III"/>
            <person name="Bloch C.A."/>
            <person name="Perna N.T."/>
            <person name="Burland V."/>
            <person name="Riley M."/>
            <person name="Collado-Vides J."/>
            <person name="Glasner J.D."/>
            <person name="Rode C.K."/>
            <person name="Mayhew G.F."/>
            <person name="Gregor J."/>
            <person name="Davis N.W."/>
            <person name="Kirkpatrick H.A."/>
            <person name="Goeden M.A."/>
            <person name="Rose D.J."/>
            <person name="Mau B."/>
            <person name="Shao Y."/>
        </authorList>
    </citation>
    <scope>NUCLEOTIDE SEQUENCE [LARGE SCALE GENOMIC DNA]</scope>
    <scope>SEQUENCE REVISION TO C-TERMINUS</scope>
    <source>
        <strain>K12 / MG1655 / ATCC 47076</strain>
    </source>
</reference>
<reference key="3">
    <citation type="journal article" date="2006" name="Mol. Syst. Biol.">
        <title>Highly accurate genome sequences of Escherichia coli K-12 strains MG1655 and W3110.</title>
        <authorList>
            <person name="Hayashi K."/>
            <person name="Morooka N."/>
            <person name="Yamamoto Y."/>
            <person name="Fujita K."/>
            <person name="Isono K."/>
            <person name="Choi S."/>
            <person name="Ohtsubo E."/>
            <person name="Baba T."/>
            <person name="Wanner B.L."/>
            <person name="Mori H."/>
            <person name="Horiuchi T."/>
        </authorList>
    </citation>
    <scope>NUCLEOTIDE SEQUENCE [LARGE SCALE GENOMIC DNA]</scope>
    <source>
        <strain>K12 / W3110 / ATCC 27325 / DSM 5911</strain>
    </source>
</reference>
<reference key="4">
    <citation type="journal article" date="1997" name="Electrophoresis">
        <title>Comparing the predicted and observed properties of proteins encoded in the genome of Escherichia coli K-12.</title>
        <authorList>
            <person name="Link A.J."/>
            <person name="Robison K."/>
            <person name="Church G.M."/>
        </authorList>
    </citation>
    <scope>PROTEIN SEQUENCE OF 220-231</scope>
    <source>
        <strain>K12 / EMG2</strain>
    </source>
</reference>
<reference key="5">
    <citation type="journal article" date="2005" name="J. Biol. Chem.">
        <title>A phosphoethanolamine transferase specific for the outer 3-deoxy-D-manno-octulosonic acid residue of Escherichia coli lipopolysaccharide. Identification of the eptB gene and Ca2+ hypersensitivity of an eptB deletion mutant.</title>
        <authorList>
            <person name="Reynolds C.M."/>
            <person name="Kalb S.R."/>
            <person name="Cotter R.J."/>
            <person name="Raetz C.R.H."/>
        </authorList>
    </citation>
    <scope>FUNCTION</scope>
    <scope>CATALYTIC ACTIVITY</scope>
    <scope>COFACTOR</scope>
    <scope>ACTIVITY REGULATION</scope>
    <scope>SUBCELLULAR LOCATION</scope>
    <source>
        <strain>K12 / W3110 / ATCC 27325 / DSM 5911</strain>
    </source>
</reference>
<reference key="6">
    <citation type="journal article" date="2005" name="Science">
        <title>Global topology analysis of the Escherichia coli inner membrane proteome.</title>
        <authorList>
            <person name="Daley D.O."/>
            <person name="Rapp M."/>
            <person name="Granseth E."/>
            <person name="Melen K."/>
            <person name="Drew D."/>
            <person name="von Heijne G."/>
        </authorList>
    </citation>
    <scope>TOPOLOGY [LARGE SCALE ANALYSIS]</scope>
    <source>
        <strain>K12 / MG1655 / ATCC 47076</strain>
    </source>
</reference>
<protein>
    <recommendedName>
        <fullName>Kdo(2)-lipid A phosphoethanolamine 7''-transferase</fullName>
        <ecNumber evidence="2">2.7.8.42</ecNumber>
    </recommendedName>
    <alternativeName>
        <fullName>Phosphoethanolamine transferase EptB</fullName>
    </alternativeName>
</protein>
<comment type="function">
    <text evidence="2">Catalyzes the addition of a phosphoethanolamine (pEtN) moiety to the outer 3-deoxy-D-manno-octulosonic acid (Kdo) residue of a Kdo(2)-lipid A. Phosphatidylethanolamines with one unsaturated acyl group function as pEtN donors and the reaction releases diacylglycerol.</text>
</comment>
<comment type="catalytic activity">
    <reaction evidence="2">
        <text>alpha-Kdo-(2-&gt;4)-alpha-Kdo-(2-&gt;6)-lipid A (E. coli) + a 1,2-diacyl-sn-glycero-3-phosphoethanolamine = 7-O-[2-aminoethoxy(hydroxy)phosphoryl]-alpha-Kdo-(2-&gt;4)-alpha-Kdo-(2-&gt;6)-lipid A + a 1,2-diacyl-sn-glycerol</text>
        <dbReference type="Rhea" id="RHEA:24698"/>
        <dbReference type="ChEBI" id="CHEBI:17815"/>
        <dbReference type="ChEBI" id="CHEBI:58540"/>
        <dbReference type="ChEBI" id="CHEBI:60085"/>
        <dbReference type="ChEBI" id="CHEBI:64612"/>
        <dbReference type="EC" id="2.7.8.42"/>
    </reaction>
</comment>
<comment type="catalytic activity">
    <reaction evidence="2">
        <text>alpha-Kdo-(2-&gt;4)-alpha-Kdo-(2-&gt;6)-lipid IVA (E. coli) + a 1,2-diacyl-sn-glycero-3-phosphoethanolamine = 7-O-[2-aminoethoxy(hydroxy)phosphoryl]-alpha-Kdo-(2-&gt;4)-alpha-Kdo-(2-&gt;6)-lipid IVA (E. coli) + a 1,2-diacyl-sn-glycerol</text>
        <dbReference type="Rhea" id="RHEA:46908"/>
        <dbReference type="ChEBI" id="CHEBI:17815"/>
        <dbReference type="ChEBI" id="CHEBI:60365"/>
        <dbReference type="ChEBI" id="CHEBI:64612"/>
        <dbReference type="ChEBI" id="CHEBI:87107"/>
        <dbReference type="EC" id="2.7.8.42"/>
    </reaction>
</comment>
<comment type="cofactor">
    <cofactor evidence="2">
        <name>Ca(2+)</name>
        <dbReference type="ChEBI" id="CHEBI:29108"/>
    </cofactor>
</comment>
<comment type="activity regulation">
    <text evidence="2">Inhibited by calcium concentrations higher than 1 mM.</text>
</comment>
<comment type="subcellular location">
    <subcellularLocation>
        <location evidence="2">Cell inner membrane</location>
        <topology evidence="2">Multi-pass membrane protein</topology>
    </subcellularLocation>
</comment>
<comment type="similarity">
    <text evidence="3">Belongs to the phosphoethanolamine transferase family. EptB subfamily.</text>
</comment>
<name>EPTB_ECOLI</name>
<dbReference type="EC" id="2.7.8.42" evidence="2"/>
<dbReference type="EMBL" id="U00039">
    <property type="protein sequence ID" value="AAB18523.1"/>
    <property type="status" value="ALT_FRAME"/>
    <property type="molecule type" value="Genomic_DNA"/>
</dbReference>
<dbReference type="EMBL" id="U00096">
    <property type="protein sequence ID" value="AAC76570.2"/>
    <property type="molecule type" value="Genomic_DNA"/>
</dbReference>
<dbReference type="EMBL" id="AP009048">
    <property type="protein sequence ID" value="BAE77749.1"/>
    <property type="molecule type" value="Genomic_DNA"/>
</dbReference>
<dbReference type="PIR" id="D65153">
    <property type="entry name" value="D65153"/>
</dbReference>
<dbReference type="RefSeq" id="NP_418002.2">
    <property type="nucleotide sequence ID" value="NC_000913.3"/>
</dbReference>
<dbReference type="RefSeq" id="WP_001269197.1">
    <property type="nucleotide sequence ID" value="NZ_SSZK01000068.1"/>
</dbReference>
<dbReference type="SMR" id="P37661"/>
<dbReference type="BioGRID" id="4262537">
    <property type="interactions" value="8"/>
</dbReference>
<dbReference type="BioGRID" id="852376">
    <property type="interactions" value="3"/>
</dbReference>
<dbReference type="FunCoup" id="P37661">
    <property type="interactions" value="47"/>
</dbReference>
<dbReference type="IntAct" id="P37661">
    <property type="interactions" value="5"/>
</dbReference>
<dbReference type="STRING" id="511145.b3546"/>
<dbReference type="jPOST" id="P37661"/>
<dbReference type="PaxDb" id="511145-b3546"/>
<dbReference type="EnsemblBacteria" id="AAC76570">
    <property type="protein sequence ID" value="AAC76570"/>
    <property type="gene ID" value="b3546"/>
</dbReference>
<dbReference type="GeneID" id="948068"/>
<dbReference type="KEGG" id="ecj:JW5660"/>
<dbReference type="KEGG" id="eco:b3546"/>
<dbReference type="KEGG" id="ecoc:C3026_19225"/>
<dbReference type="PATRIC" id="fig|1411691.4.peg.3168"/>
<dbReference type="EchoBASE" id="EB2176"/>
<dbReference type="eggNOG" id="COG2194">
    <property type="taxonomic scope" value="Bacteria"/>
</dbReference>
<dbReference type="HOGENOM" id="CLU_018534_1_1_6"/>
<dbReference type="InParanoid" id="P37661"/>
<dbReference type="OMA" id="FAMQSEV"/>
<dbReference type="OrthoDB" id="9786870at2"/>
<dbReference type="PhylomeDB" id="P37661"/>
<dbReference type="BioCyc" id="EcoCyc:EG12267-MONOMER"/>
<dbReference type="BioCyc" id="MetaCyc:EG12267-MONOMER"/>
<dbReference type="BRENDA" id="2.7.8.42">
    <property type="organism ID" value="2026"/>
</dbReference>
<dbReference type="PRO" id="PR:P37661"/>
<dbReference type="Proteomes" id="UP000000625">
    <property type="component" value="Chromosome"/>
</dbReference>
<dbReference type="GO" id="GO:0005886">
    <property type="term" value="C:plasma membrane"/>
    <property type="evidence" value="ECO:0000314"/>
    <property type="project" value="EcoCyc"/>
</dbReference>
<dbReference type="GO" id="GO:0043838">
    <property type="term" value="F:phosphatidylethanolamine:Kdo2-lipid A phosphoethanolamine transferase activity"/>
    <property type="evidence" value="ECO:0000314"/>
    <property type="project" value="EcoCyc"/>
</dbReference>
<dbReference type="GO" id="GO:0009245">
    <property type="term" value="P:lipid A biosynthetic process"/>
    <property type="evidence" value="ECO:0000314"/>
    <property type="project" value="EcoCyc"/>
</dbReference>
<dbReference type="GO" id="GO:0009244">
    <property type="term" value="P:lipopolysaccharide core region biosynthetic process"/>
    <property type="evidence" value="ECO:0000318"/>
    <property type="project" value="GO_Central"/>
</dbReference>
<dbReference type="CDD" id="cd16017">
    <property type="entry name" value="LptA"/>
    <property type="match status" value="1"/>
</dbReference>
<dbReference type="FunFam" id="3.40.720.10:FF:000030">
    <property type="entry name" value="Phosphoethanolamine transferase eptB"/>
    <property type="match status" value="1"/>
</dbReference>
<dbReference type="Gene3D" id="3.40.720.10">
    <property type="entry name" value="Alkaline Phosphatase, subunit A"/>
    <property type="match status" value="1"/>
</dbReference>
<dbReference type="InterPro" id="IPR017850">
    <property type="entry name" value="Alkaline_phosphatase_core_sf"/>
</dbReference>
<dbReference type="InterPro" id="IPR012549">
    <property type="entry name" value="EptA-like_N"/>
</dbReference>
<dbReference type="InterPro" id="IPR040423">
    <property type="entry name" value="PEA_transferase"/>
</dbReference>
<dbReference type="InterPro" id="IPR000917">
    <property type="entry name" value="Sulfatase_N"/>
</dbReference>
<dbReference type="NCBIfam" id="NF008593">
    <property type="entry name" value="PRK11560.1"/>
    <property type="match status" value="1"/>
</dbReference>
<dbReference type="PANTHER" id="PTHR30443">
    <property type="entry name" value="INNER MEMBRANE PROTEIN"/>
    <property type="match status" value="1"/>
</dbReference>
<dbReference type="PANTHER" id="PTHR30443:SF3">
    <property type="entry name" value="KDO(2)-LIPID A PHOSPHOETHANOLAMINE 7''-TRANSFERASE"/>
    <property type="match status" value="1"/>
</dbReference>
<dbReference type="Pfam" id="PF08019">
    <property type="entry name" value="EptA_B_N"/>
    <property type="match status" value="1"/>
</dbReference>
<dbReference type="Pfam" id="PF00884">
    <property type="entry name" value="Sulfatase"/>
    <property type="match status" value="1"/>
</dbReference>
<dbReference type="SUPFAM" id="SSF53649">
    <property type="entry name" value="Alkaline phosphatase-like"/>
    <property type="match status" value="1"/>
</dbReference>
<accession>P37661</accession>
<accession>Q2M7K7</accession>
<evidence type="ECO:0000255" key="1"/>
<evidence type="ECO:0000269" key="2">
    <source>
    </source>
</evidence>
<evidence type="ECO:0000305" key="3"/>
<gene>
    <name type="primary">eptB</name>
    <name type="synonym">yhjW</name>
    <name type="ordered locus">b3546</name>
    <name type="ordered locus">JW5660</name>
</gene>